<feature type="signal peptide" evidence="2">
    <location>
        <begin position="1"/>
        <end position="20"/>
    </location>
</feature>
<feature type="chain" id="PRO_0000034214" description="Protein disulfide-isomerase">
    <location>
        <begin position="21"/>
        <end position="515"/>
    </location>
</feature>
<feature type="domain" description="Thioredoxin 1" evidence="3">
    <location>
        <begin position="21"/>
        <end position="136"/>
    </location>
</feature>
<feature type="domain" description="Thioredoxin 2" evidence="3">
    <location>
        <begin position="343"/>
        <end position="470"/>
    </location>
</feature>
<feature type="region of interest" description="Disordered" evidence="5">
    <location>
        <begin position="472"/>
        <end position="515"/>
    </location>
</feature>
<feature type="short sequence motif" description="Prevents secretion from ER" evidence="4">
    <location>
        <begin position="512"/>
        <end position="515"/>
    </location>
</feature>
<feature type="compositionally biased region" description="Basic and acidic residues" evidence="5">
    <location>
        <begin position="472"/>
        <end position="496"/>
    </location>
</feature>
<feature type="compositionally biased region" description="Basic and acidic residues" evidence="5">
    <location>
        <begin position="506"/>
        <end position="515"/>
    </location>
</feature>
<feature type="active site" description="Nucleophile" evidence="1">
    <location>
        <position position="58"/>
    </location>
</feature>
<feature type="active site" description="Nucleophile" evidence="1">
    <location>
        <position position="61"/>
    </location>
</feature>
<feature type="active site" description="Nucleophile" evidence="1">
    <location>
        <position position="393"/>
    </location>
</feature>
<feature type="active site" description="Nucleophile" evidence="1">
    <location>
        <position position="396"/>
    </location>
</feature>
<feature type="site" description="Contributes to redox potential value" evidence="1">
    <location>
        <position position="59"/>
    </location>
</feature>
<feature type="site" description="Contributes to redox potential value" evidence="1">
    <location>
        <position position="60"/>
    </location>
</feature>
<feature type="site" description="Lowers pKa of C-terminal Cys of first active site" evidence="1">
    <location>
        <position position="121"/>
    </location>
</feature>
<feature type="site" description="Contributes to redox potential value" evidence="1">
    <location>
        <position position="394"/>
    </location>
</feature>
<feature type="site" description="Contributes to redox potential value" evidence="1">
    <location>
        <position position="395"/>
    </location>
</feature>
<feature type="site" description="Lowers pKa of C-terminal Cys of second active site" evidence="1">
    <location>
        <position position="456"/>
    </location>
</feature>
<feature type="disulfide bond" description="Redox-active" evidence="3">
    <location>
        <begin position="58"/>
        <end position="61"/>
    </location>
</feature>
<feature type="disulfide bond" description="Redox-active" evidence="3">
    <location>
        <begin position="393"/>
        <end position="396"/>
    </location>
</feature>
<keyword id="KW-1015">Disulfide bond</keyword>
<keyword id="KW-0256">Endoplasmic reticulum</keyword>
<keyword id="KW-0413">Isomerase</keyword>
<keyword id="KW-0676">Redox-active center</keyword>
<keyword id="KW-1185">Reference proteome</keyword>
<keyword id="KW-0677">Repeat</keyword>
<keyword id="KW-0732">Signal</keyword>
<gene>
    <name type="primary">pdiA</name>
    <name type="ORF">AO090001000733</name>
</gene>
<sequence length="515" mass="56458">MRTFAPWILSLLGASAVASAADATAEAPSDVVSLTGDTFETFVKEHDLVLAEFFAPWCGHCKALAPKYEQAATELKEKNIPLVKVDCTEEEALCRDQGVEGYPTLKIFRGLDAVKPYQGARQTEAIVSYMVKQSLPAVSPVTPENLEEIKTMDKIVVIGYIASDDQTANDIFTTFAESQRDNYLFAATSDASIAKAEGVKQPSIVLYKDFDEKKATYDGEIEQDALLSWVKTASTPLVGELGPETYSGYITAGIPLAYIFAETKEEREQFTEEFKFIAEKHKGSINIVTIDAKLYGAHAGNLNLDPSKFPAFAIQDPEKNAKYPYDQSKEVKAKDIGKFIQDVLDDKVEPSIKSEAIPETQEGPVTVVVAHSYKDLVLDNEKDVLLEFYAPWCGHCKALAPKYEELASLYKDIPEVTIAKIDATANDVPDSITGFPTIKLFAAGAKDSPVEYEGSRTVEDLANFVKENGKHKVDALEVDPKKEQESGDATETRAASDETETPAATSDDKSEHDEL</sequence>
<evidence type="ECO:0000250" key="1"/>
<evidence type="ECO:0000255" key="2"/>
<evidence type="ECO:0000255" key="3">
    <source>
        <dbReference type="PROSITE-ProRule" id="PRU00691"/>
    </source>
</evidence>
<evidence type="ECO:0000255" key="4">
    <source>
        <dbReference type="PROSITE-ProRule" id="PRU10138"/>
    </source>
</evidence>
<evidence type="ECO:0000256" key="5">
    <source>
        <dbReference type="SAM" id="MobiDB-lite"/>
    </source>
</evidence>
<evidence type="ECO:0000305" key="6"/>
<organism>
    <name type="scientific">Aspergillus oryzae (strain ATCC 42149 / RIB 40)</name>
    <name type="common">Yellow koji mold</name>
    <dbReference type="NCBI Taxonomy" id="510516"/>
    <lineage>
        <taxon>Eukaryota</taxon>
        <taxon>Fungi</taxon>
        <taxon>Dikarya</taxon>
        <taxon>Ascomycota</taxon>
        <taxon>Pezizomycotina</taxon>
        <taxon>Eurotiomycetes</taxon>
        <taxon>Eurotiomycetidae</taxon>
        <taxon>Eurotiales</taxon>
        <taxon>Aspergillaceae</taxon>
        <taxon>Aspergillus</taxon>
        <taxon>Aspergillus subgen. Circumdati</taxon>
    </lineage>
</organism>
<reference key="1">
    <citation type="submission" date="1996-06" db="EMBL/GenBank/DDBJ databases">
        <title>Cloning, characterization and overexpression of a gene (pdiA) encoding protein disulfide isomerase of Aspergillus oryzae.</title>
        <authorList>
            <person name="Lee B."/>
            <person name="Yamada O."/>
            <person name="Kitamoto K."/>
            <person name="Takahashi K."/>
        </authorList>
    </citation>
    <scope>NUCLEOTIDE SEQUENCE [GENOMIC DNA]</scope>
    <source>
        <strain>ATCC 42149 / RIB 40</strain>
    </source>
</reference>
<reference key="2">
    <citation type="journal article" date="2005" name="Nature">
        <title>Genome sequencing and analysis of Aspergillus oryzae.</title>
        <authorList>
            <person name="Machida M."/>
            <person name="Asai K."/>
            <person name="Sano M."/>
            <person name="Tanaka T."/>
            <person name="Kumagai T."/>
            <person name="Terai G."/>
            <person name="Kusumoto K."/>
            <person name="Arima T."/>
            <person name="Akita O."/>
            <person name="Kashiwagi Y."/>
            <person name="Abe K."/>
            <person name="Gomi K."/>
            <person name="Horiuchi H."/>
            <person name="Kitamoto K."/>
            <person name="Kobayashi T."/>
            <person name="Takeuchi M."/>
            <person name="Denning D.W."/>
            <person name="Galagan J.E."/>
            <person name="Nierman W.C."/>
            <person name="Yu J."/>
            <person name="Archer D.B."/>
            <person name="Bennett J.W."/>
            <person name="Bhatnagar D."/>
            <person name="Cleveland T.E."/>
            <person name="Fedorova N.D."/>
            <person name="Gotoh O."/>
            <person name="Horikawa H."/>
            <person name="Hosoyama A."/>
            <person name="Ichinomiya M."/>
            <person name="Igarashi R."/>
            <person name="Iwashita K."/>
            <person name="Juvvadi P.R."/>
            <person name="Kato M."/>
            <person name="Kato Y."/>
            <person name="Kin T."/>
            <person name="Kokubun A."/>
            <person name="Maeda H."/>
            <person name="Maeyama N."/>
            <person name="Maruyama J."/>
            <person name="Nagasaki H."/>
            <person name="Nakajima T."/>
            <person name="Oda K."/>
            <person name="Okada K."/>
            <person name="Paulsen I."/>
            <person name="Sakamoto K."/>
            <person name="Sawano T."/>
            <person name="Takahashi M."/>
            <person name="Takase K."/>
            <person name="Terabayashi Y."/>
            <person name="Wortman J.R."/>
            <person name="Yamada O."/>
            <person name="Yamagata Y."/>
            <person name="Anazawa H."/>
            <person name="Hata Y."/>
            <person name="Koide Y."/>
            <person name="Komori T."/>
            <person name="Koyama Y."/>
            <person name="Minetoki T."/>
            <person name="Suharnan S."/>
            <person name="Tanaka A."/>
            <person name="Isono K."/>
            <person name="Kuhara S."/>
            <person name="Ogasawara N."/>
            <person name="Kikuchi H."/>
        </authorList>
    </citation>
    <scope>NUCLEOTIDE SEQUENCE [LARGE SCALE GENOMIC DNA]</scope>
    <source>
        <strain>ATCC 42149 / RIB 40</strain>
    </source>
</reference>
<dbReference type="EC" id="5.3.4.1"/>
<dbReference type="EMBL" id="D85900">
    <property type="protein sequence ID" value="BAA12913.1"/>
    <property type="molecule type" value="Genomic_DNA"/>
</dbReference>
<dbReference type="EMBL" id="BA000050">
    <property type="protein sequence ID" value="BAE57222.1"/>
    <property type="molecule type" value="Genomic_DNA"/>
</dbReference>
<dbReference type="RefSeq" id="XP_001819224.1">
    <property type="nucleotide sequence ID" value="XM_001819172.2"/>
</dbReference>
<dbReference type="SMR" id="Q00248"/>
<dbReference type="STRING" id="510516.Q00248"/>
<dbReference type="EnsemblFungi" id="BAE57222">
    <property type="protein sequence ID" value="BAE57222"/>
    <property type="gene ID" value="AO090001000733"/>
</dbReference>
<dbReference type="GeneID" id="5991195"/>
<dbReference type="KEGG" id="aor:AO090001000733"/>
<dbReference type="VEuPathDB" id="FungiDB:AO090001000733"/>
<dbReference type="HOGENOM" id="CLU_025879_5_0_1"/>
<dbReference type="OMA" id="FFGMKKD"/>
<dbReference type="OrthoDB" id="78835at5052"/>
<dbReference type="Proteomes" id="UP000006564">
    <property type="component" value="Chromosome 2"/>
</dbReference>
<dbReference type="GO" id="GO:0005788">
    <property type="term" value="C:endoplasmic reticulum lumen"/>
    <property type="evidence" value="ECO:0007669"/>
    <property type="project" value="UniProtKB-SubCell"/>
</dbReference>
<dbReference type="GO" id="GO:0003756">
    <property type="term" value="F:protein disulfide isomerase activity"/>
    <property type="evidence" value="ECO:0007669"/>
    <property type="project" value="UniProtKB-EC"/>
</dbReference>
<dbReference type="GO" id="GO:0006457">
    <property type="term" value="P:protein folding"/>
    <property type="evidence" value="ECO:0007669"/>
    <property type="project" value="TreeGrafter"/>
</dbReference>
<dbReference type="GO" id="GO:0034976">
    <property type="term" value="P:response to endoplasmic reticulum stress"/>
    <property type="evidence" value="ECO:0007669"/>
    <property type="project" value="TreeGrafter"/>
</dbReference>
<dbReference type="CDD" id="cd02961">
    <property type="entry name" value="PDI_a_family"/>
    <property type="match status" value="1"/>
</dbReference>
<dbReference type="CDD" id="cd02995">
    <property type="entry name" value="PDI_a_PDI_a'_C"/>
    <property type="match status" value="1"/>
</dbReference>
<dbReference type="CDD" id="cd02982">
    <property type="entry name" value="PDI_b'_family"/>
    <property type="match status" value="1"/>
</dbReference>
<dbReference type="CDD" id="cd02981">
    <property type="entry name" value="PDI_b_family"/>
    <property type="match status" value="1"/>
</dbReference>
<dbReference type="FunFam" id="3.40.30.10:FF:000139">
    <property type="entry name" value="Protein disulfide-isomerase"/>
    <property type="match status" value="1"/>
</dbReference>
<dbReference type="FunFam" id="3.40.30.10:FF:000154">
    <property type="entry name" value="Protein disulfide-isomerase"/>
    <property type="match status" value="1"/>
</dbReference>
<dbReference type="FunFam" id="3.40.30.10:FF:000185">
    <property type="entry name" value="Protein disulfide-isomerase"/>
    <property type="match status" value="1"/>
</dbReference>
<dbReference type="FunFam" id="3.40.30.10:FF:000017">
    <property type="entry name" value="Protein disulfide-isomerase A4"/>
    <property type="match status" value="1"/>
</dbReference>
<dbReference type="Gene3D" id="3.40.30.10">
    <property type="entry name" value="Glutaredoxin"/>
    <property type="match status" value="4"/>
</dbReference>
<dbReference type="InterPro" id="IPR005788">
    <property type="entry name" value="PDI_thioredoxin-like_dom"/>
</dbReference>
<dbReference type="InterPro" id="IPR005792">
    <property type="entry name" value="Prot_disulphide_isomerase"/>
</dbReference>
<dbReference type="InterPro" id="IPR036249">
    <property type="entry name" value="Thioredoxin-like_sf"/>
</dbReference>
<dbReference type="InterPro" id="IPR017937">
    <property type="entry name" value="Thioredoxin_CS"/>
</dbReference>
<dbReference type="InterPro" id="IPR013766">
    <property type="entry name" value="Thioredoxin_domain"/>
</dbReference>
<dbReference type="NCBIfam" id="TIGR01130">
    <property type="entry name" value="ER_PDI_fam"/>
    <property type="match status" value="1"/>
</dbReference>
<dbReference type="NCBIfam" id="TIGR01126">
    <property type="entry name" value="pdi_dom"/>
    <property type="match status" value="2"/>
</dbReference>
<dbReference type="PANTHER" id="PTHR18929">
    <property type="entry name" value="PROTEIN DISULFIDE ISOMERASE"/>
    <property type="match status" value="1"/>
</dbReference>
<dbReference type="PANTHER" id="PTHR18929:SF132">
    <property type="entry name" value="PROTEIN DISULFIDE-ISOMERASE A3"/>
    <property type="match status" value="1"/>
</dbReference>
<dbReference type="Pfam" id="PF00085">
    <property type="entry name" value="Thioredoxin"/>
    <property type="match status" value="2"/>
</dbReference>
<dbReference type="Pfam" id="PF13848">
    <property type="entry name" value="Thioredoxin_6"/>
    <property type="match status" value="1"/>
</dbReference>
<dbReference type="PRINTS" id="PR00421">
    <property type="entry name" value="THIOREDOXIN"/>
</dbReference>
<dbReference type="SUPFAM" id="SSF52833">
    <property type="entry name" value="Thioredoxin-like"/>
    <property type="match status" value="4"/>
</dbReference>
<dbReference type="PROSITE" id="PS00014">
    <property type="entry name" value="ER_TARGET"/>
    <property type="match status" value="1"/>
</dbReference>
<dbReference type="PROSITE" id="PS00194">
    <property type="entry name" value="THIOREDOXIN_1"/>
    <property type="match status" value="2"/>
</dbReference>
<dbReference type="PROSITE" id="PS51352">
    <property type="entry name" value="THIOREDOXIN_2"/>
    <property type="match status" value="2"/>
</dbReference>
<accession>Q00248</accession>
<accession>Q2UMJ3</accession>
<name>PDI_ASPOR</name>
<proteinExistence type="inferred from homology"/>
<protein>
    <recommendedName>
        <fullName>Protein disulfide-isomerase</fullName>
        <shortName>PDI</shortName>
        <ecNumber>5.3.4.1</ecNumber>
    </recommendedName>
</protein>
<comment type="function">
    <text evidence="1">Participates in the folding of proteins containing disulfide bonds, may be involved in glycosylation, prolyl hydroxylation and triglyceride transfer.</text>
</comment>
<comment type="catalytic activity">
    <reaction>
        <text>Catalyzes the rearrangement of -S-S- bonds in proteins.</text>
        <dbReference type="EC" id="5.3.4.1"/>
    </reaction>
</comment>
<comment type="subcellular location">
    <subcellularLocation>
        <location evidence="4">Endoplasmic reticulum lumen</location>
    </subcellularLocation>
</comment>
<comment type="similarity">
    <text evidence="6">Belongs to the protein disulfide isomerase family.</text>
</comment>